<sequence length="165" mass="18951">MSLLLPDSGLIFWMLLSFGIVFAVLAKYGFPVIIKMVEGRKTYIDESLEVAREANAQLSRLKEEGEAIVAAANKEQGRIMKEAMQEREKIIYEARKQAEIAAQKELDEVKRQIQIEKDEAIRDIRRQVALLSVDIAEKVIRKNLDDKQEQMGMIDRMLDEVLTKN</sequence>
<evidence type="ECO:0000255" key="1">
    <source>
        <dbReference type="HAMAP-Rule" id="MF_01398"/>
    </source>
</evidence>
<keyword id="KW-0066">ATP synthesis</keyword>
<keyword id="KW-0997">Cell inner membrane</keyword>
<keyword id="KW-1003">Cell membrane</keyword>
<keyword id="KW-0138">CF(0)</keyword>
<keyword id="KW-0375">Hydrogen ion transport</keyword>
<keyword id="KW-0406">Ion transport</keyword>
<keyword id="KW-0472">Membrane</keyword>
<keyword id="KW-0812">Transmembrane</keyword>
<keyword id="KW-1133">Transmembrane helix</keyword>
<keyword id="KW-0813">Transport</keyword>
<accession>Q5LD84</accession>
<reference key="1">
    <citation type="journal article" date="2005" name="Science">
        <title>Extensive DNA inversions in the B. fragilis genome control variable gene expression.</title>
        <authorList>
            <person name="Cerdeno-Tarraga A.-M."/>
            <person name="Patrick S."/>
            <person name="Crossman L.C."/>
            <person name="Blakely G."/>
            <person name="Abratt V."/>
            <person name="Lennard N."/>
            <person name="Poxton I."/>
            <person name="Duerden B."/>
            <person name="Harris B."/>
            <person name="Quail M.A."/>
            <person name="Barron A."/>
            <person name="Clark L."/>
            <person name="Corton C."/>
            <person name="Doggett J."/>
            <person name="Holden M.T.G."/>
            <person name="Larke N."/>
            <person name="Line A."/>
            <person name="Lord A."/>
            <person name="Norbertczak H."/>
            <person name="Ormond D."/>
            <person name="Price C."/>
            <person name="Rabbinowitsch E."/>
            <person name="Woodward J."/>
            <person name="Barrell B.G."/>
            <person name="Parkhill J."/>
        </authorList>
    </citation>
    <scope>NUCLEOTIDE SEQUENCE [LARGE SCALE GENOMIC DNA]</scope>
    <source>
        <strain>ATCC 25285 / DSM 2151 / CCUG 4856 / JCM 11019 / LMG 10263 / NCTC 9343 / Onslow / VPI 2553 / EN-2</strain>
    </source>
</reference>
<gene>
    <name evidence="1" type="primary">atpF</name>
    <name type="ordered locus">BF2232</name>
</gene>
<dbReference type="EMBL" id="CR626927">
    <property type="protein sequence ID" value="CAH07926.1"/>
    <property type="molecule type" value="Genomic_DNA"/>
</dbReference>
<dbReference type="RefSeq" id="WP_005787487.1">
    <property type="nucleotide sequence ID" value="NZ_UFTH01000001.1"/>
</dbReference>
<dbReference type="SMR" id="Q5LD84"/>
<dbReference type="PaxDb" id="272559-BF9343_2145"/>
<dbReference type="GeneID" id="60367666"/>
<dbReference type="KEGG" id="bfs:BF9343_2145"/>
<dbReference type="eggNOG" id="COG0711">
    <property type="taxonomic scope" value="Bacteria"/>
</dbReference>
<dbReference type="HOGENOM" id="CLU_079215_4_1_10"/>
<dbReference type="Proteomes" id="UP000006731">
    <property type="component" value="Chromosome"/>
</dbReference>
<dbReference type="GO" id="GO:0005886">
    <property type="term" value="C:plasma membrane"/>
    <property type="evidence" value="ECO:0007669"/>
    <property type="project" value="UniProtKB-SubCell"/>
</dbReference>
<dbReference type="GO" id="GO:0045259">
    <property type="term" value="C:proton-transporting ATP synthase complex"/>
    <property type="evidence" value="ECO:0007669"/>
    <property type="project" value="UniProtKB-KW"/>
</dbReference>
<dbReference type="GO" id="GO:0046933">
    <property type="term" value="F:proton-transporting ATP synthase activity, rotational mechanism"/>
    <property type="evidence" value="ECO:0007669"/>
    <property type="project" value="UniProtKB-UniRule"/>
</dbReference>
<dbReference type="GO" id="GO:0046961">
    <property type="term" value="F:proton-transporting ATPase activity, rotational mechanism"/>
    <property type="evidence" value="ECO:0007669"/>
    <property type="project" value="TreeGrafter"/>
</dbReference>
<dbReference type="CDD" id="cd06503">
    <property type="entry name" value="ATP-synt_Fo_b"/>
    <property type="match status" value="1"/>
</dbReference>
<dbReference type="HAMAP" id="MF_01398">
    <property type="entry name" value="ATP_synth_b_bprime"/>
    <property type="match status" value="1"/>
</dbReference>
<dbReference type="InterPro" id="IPR002146">
    <property type="entry name" value="ATP_synth_b/b'su_bac/chlpt"/>
</dbReference>
<dbReference type="InterPro" id="IPR005864">
    <property type="entry name" value="ATP_synth_F0_bsu_bac"/>
</dbReference>
<dbReference type="InterPro" id="IPR050059">
    <property type="entry name" value="ATP_synthase_B_chain"/>
</dbReference>
<dbReference type="NCBIfam" id="TIGR01144">
    <property type="entry name" value="ATP_synt_b"/>
    <property type="match status" value="1"/>
</dbReference>
<dbReference type="PANTHER" id="PTHR33445:SF1">
    <property type="entry name" value="ATP SYNTHASE SUBUNIT B"/>
    <property type="match status" value="1"/>
</dbReference>
<dbReference type="PANTHER" id="PTHR33445">
    <property type="entry name" value="ATP SYNTHASE SUBUNIT B', CHLOROPLASTIC"/>
    <property type="match status" value="1"/>
</dbReference>
<dbReference type="Pfam" id="PF00430">
    <property type="entry name" value="ATP-synt_B"/>
    <property type="match status" value="1"/>
</dbReference>
<proteinExistence type="inferred from homology"/>
<organism>
    <name type="scientific">Bacteroides fragilis (strain ATCC 25285 / DSM 2151 / CCUG 4856 / JCM 11019 / LMG 10263 / NCTC 9343 / Onslow / VPI 2553 / EN-2)</name>
    <dbReference type="NCBI Taxonomy" id="272559"/>
    <lineage>
        <taxon>Bacteria</taxon>
        <taxon>Pseudomonadati</taxon>
        <taxon>Bacteroidota</taxon>
        <taxon>Bacteroidia</taxon>
        <taxon>Bacteroidales</taxon>
        <taxon>Bacteroidaceae</taxon>
        <taxon>Bacteroides</taxon>
    </lineage>
</organism>
<name>ATPF_BACFN</name>
<feature type="chain" id="PRO_0000368338" description="ATP synthase subunit b">
    <location>
        <begin position="1"/>
        <end position="165"/>
    </location>
</feature>
<feature type="transmembrane region" description="Helical" evidence="1">
    <location>
        <begin position="10"/>
        <end position="30"/>
    </location>
</feature>
<protein>
    <recommendedName>
        <fullName evidence="1">ATP synthase subunit b</fullName>
    </recommendedName>
    <alternativeName>
        <fullName evidence="1">ATP synthase F(0) sector subunit b</fullName>
    </alternativeName>
    <alternativeName>
        <fullName evidence="1">ATPase subunit I</fullName>
    </alternativeName>
    <alternativeName>
        <fullName evidence="1">F-type ATPase subunit b</fullName>
        <shortName evidence="1">F-ATPase subunit b</shortName>
    </alternativeName>
</protein>
<comment type="function">
    <text evidence="1">F(1)F(0) ATP synthase produces ATP from ADP in the presence of a proton or sodium gradient. F-type ATPases consist of two structural domains, F(1) containing the extramembraneous catalytic core and F(0) containing the membrane proton channel, linked together by a central stalk and a peripheral stalk. During catalysis, ATP synthesis in the catalytic domain of F(1) is coupled via a rotary mechanism of the central stalk subunits to proton translocation.</text>
</comment>
<comment type="function">
    <text evidence="1">Component of the F(0) channel, it forms part of the peripheral stalk, linking F(1) to F(0).</text>
</comment>
<comment type="subunit">
    <text evidence="1">F-type ATPases have 2 components, F(1) - the catalytic core - and F(0) - the membrane proton channel. F(1) has five subunits: alpha(3), beta(3), gamma(1), delta(1), epsilon(1). F(0) has three main subunits: a(1), b(2) and c(10-14). The alpha and beta chains form an alternating ring which encloses part of the gamma chain. F(1) is attached to F(0) by a central stalk formed by the gamma and epsilon chains, while a peripheral stalk is formed by the delta and b chains.</text>
</comment>
<comment type="subcellular location">
    <subcellularLocation>
        <location evidence="1">Cell inner membrane</location>
        <topology evidence="1">Single-pass membrane protein</topology>
    </subcellularLocation>
</comment>
<comment type="similarity">
    <text evidence="1">Belongs to the ATPase B chain family.</text>
</comment>